<keyword id="KW-1015">Disulfide bond</keyword>
<keyword id="KW-0872">Ion channel impairing toxin</keyword>
<keyword id="KW-0528">Neurotoxin</keyword>
<keyword id="KW-0964">Secreted</keyword>
<keyword id="KW-0732">Signal</keyword>
<keyword id="KW-0800">Toxin</keyword>
<keyword id="KW-0738">Voltage-gated sodium channel impairing toxin</keyword>
<name>SNAY5_LYCMC</name>
<dbReference type="EMBL" id="GT028833">
    <property type="status" value="NOT_ANNOTATED_CDS"/>
    <property type="molecule type" value="mRNA"/>
</dbReference>
<dbReference type="SMR" id="P0CI60"/>
<dbReference type="GO" id="GO:0005576">
    <property type="term" value="C:extracellular region"/>
    <property type="evidence" value="ECO:0007669"/>
    <property type="project" value="UniProtKB-SubCell"/>
</dbReference>
<dbReference type="GO" id="GO:0019871">
    <property type="term" value="F:sodium channel inhibitor activity"/>
    <property type="evidence" value="ECO:0007669"/>
    <property type="project" value="InterPro"/>
</dbReference>
<dbReference type="GO" id="GO:0090729">
    <property type="term" value="F:toxin activity"/>
    <property type="evidence" value="ECO:0007669"/>
    <property type="project" value="UniProtKB-KW"/>
</dbReference>
<dbReference type="GO" id="GO:0006952">
    <property type="term" value="P:defense response"/>
    <property type="evidence" value="ECO:0007669"/>
    <property type="project" value="InterPro"/>
</dbReference>
<dbReference type="CDD" id="cd23106">
    <property type="entry name" value="neurotoxins_LC_scorpion"/>
    <property type="match status" value="1"/>
</dbReference>
<dbReference type="Gene3D" id="3.30.30.10">
    <property type="entry name" value="Knottin, scorpion toxin-like"/>
    <property type="match status" value="1"/>
</dbReference>
<dbReference type="InterPro" id="IPR044062">
    <property type="entry name" value="LCN-type_CS_alpha_beta_dom"/>
</dbReference>
<dbReference type="InterPro" id="IPR003614">
    <property type="entry name" value="Scorpion_toxin-like"/>
</dbReference>
<dbReference type="InterPro" id="IPR036574">
    <property type="entry name" value="Scorpion_toxin-like_sf"/>
</dbReference>
<dbReference type="InterPro" id="IPR018218">
    <property type="entry name" value="Scorpion_toxinL"/>
</dbReference>
<dbReference type="InterPro" id="IPR002061">
    <property type="entry name" value="Scorpion_toxinL/defensin"/>
</dbReference>
<dbReference type="Pfam" id="PF00537">
    <property type="entry name" value="Toxin_3"/>
    <property type="match status" value="1"/>
</dbReference>
<dbReference type="PRINTS" id="PR00285">
    <property type="entry name" value="SCORPNTOXIN"/>
</dbReference>
<dbReference type="SMART" id="SM00505">
    <property type="entry name" value="Knot1"/>
    <property type="match status" value="1"/>
</dbReference>
<dbReference type="SUPFAM" id="SSF57095">
    <property type="entry name" value="Scorpion toxin-like"/>
    <property type="match status" value="1"/>
</dbReference>
<dbReference type="PROSITE" id="PS51863">
    <property type="entry name" value="LCN_CSAB"/>
    <property type="match status" value="1"/>
</dbReference>
<comment type="function">
    <text evidence="1">Binds voltage-independently at site-4 of sodium channels (Nav) and shift the voltage of activation toward more negative potentials thereby affecting sodium channel activation and promoting spontaneous and repetitive firing.</text>
</comment>
<comment type="subcellular location">
    <subcellularLocation>
        <location evidence="1">Secreted</location>
    </subcellularLocation>
</comment>
<comment type="tissue specificity">
    <text>Expressed by the venom gland.</text>
</comment>
<comment type="domain">
    <text evidence="4">Has the structural arrangement of an alpha-helix connected to antiparallel beta-sheets by disulfide bonds (CS-alpha/beta).</text>
</comment>
<comment type="similarity">
    <text evidence="4">Belongs to the long (4 C-C) scorpion toxin superfamily. Sodium channel inhibitor family. Beta subfamily.</text>
</comment>
<protein>
    <recommendedName>
        <fullName>Neurotoxin LmNaTx34.5</fullName>
    </recommendedName>
</protein>
<accession>P0CI60</accession>
<reference key="1">
    <citation type="journal article" date="2010" name="BMC Genomics">
        <title>Comparative venom gland transcriptome analysis of the scorpion Lychas mucronatus reveals intraspecific toxic gene diversity and new venomous components.</title>
        <authorList>
            <person name="Zhao R."/>
            <person name="Ma Y."/>
            <person name="He Y."/>
            <person name="Di Z."/>
            <person name="Wu Y.-L."/>
            <person name="Cao Z.-J."/>
            <person name="Li W.-X."/>
        </authorList>
    </citation>
    <scope>NUCLEOTIDE SEQUENCE [MRNA]</scope>
    <source>
        <strain>Yunnan</strain>
        <tissue>Venom gland</tissue>
    </source>
</reference>
<organism>
    <name type="scientific">Lychas mucronatus</name>
    <name type="common">Chinese swimming scorpion</name>
    <dbReference type="NCBI Taxonomy" id="172552"/>
    <lineage>
        <taxon>Eukaryota</taxon>
        <taxon>Metazoa</taxon>
        <taxon>Ecdysozoa</taxon>
        <taxon>Arthropoda</taxon>
        <taxon>Chelicerata</taxon>
        <taxon>Arachnida</taxon>
        <taxon>Scorpiones</taxon>
        <taxon>Buthida</taxon>
        <taxon>Buthoidea</taxon>
        <taxon>Buthidae</taxon>
        <taxon>Lychas</taxon>
    </lineage>
</organism>
<evidence type="ECO:0000250" key="1"/>
<evidence type="ECO:0000255" key="2"/>
<evidence type="ECO:0000255" key="3">
    <source>
        <dbReference type="PROSITE-ProRule" id="PRU01210"/>
    </source>
</evidence>
<evidence type="ECO:0000305" key="4"/>
<feature type="signal peptide" evidence="2">
    <location>
        <begin position="1" status="less than"/>
        <end position="15"/>
    </location>
</feature>
<feature type="chain" id="PRO_0000403821" description="Neurotoxin LmNaTx34.5">
    <location>
        <begin position="16"/>
        <end position="83"/>
    </location>
</feature>
<feature type="domain" description="LCN-type CS-alpha/beta" evidence="3">
    <location>
        <begin position="16"/>
        <end position="82"/>
    </location>
</feature>
<feature type="disulfide bond" evidence="3">
    <location>
        <begin position="29"/>
        <end position="81"/>
    </location>
</feature>
<feature type="disulfide bond" evidence="3">
    <location>
        <begin position="33"/>
        <end position="54"/>
    </location>
</feature>
<feature type="disulfide bond" evidence="3">
    <location>
        <begin position="40"/>
        <end position="61"/>
    </location>
</feature>
<feature type="disulfide bond" evidence="3">
    <location>
        <begin position="44"/>
        <end position="63"/>
    </location>
</feature>
<feature type="non-terminal residue">
    <location>
        <position position="1"/>
    </location>
</feature>
<proteinExistence type="evidence at transcript level"/>
<sequence length="83" mass="9472">FILVVIALMVIEVKSDGYLMVRAGREKGCKVWCVINNTYCDKDCKLKGGSYGYCYFWKLACYCEGLPESSPDIWTYEKNTCST</sequence>